<name>RUVC_ACAM1</name>
<proteinExistence type="inferred from homology"/>
<reference key="1">
    <citation type="journal article" date="2008" name="Proc. Natl. Acad. Sci. U.S.A.">
        <title>Niche adaptation and genome expansion in the chlorophyll d-producing cyanobacterium Acaryochloris marina.</title>
        <authorList>
            <person name="Swingley W.D."/>
            <person name="Chen M."/>
            <person name="Cheung P.C."/>
            <person name="Conrad A.L."/>
            <person name="Dejesa L.C."/>
            <person name="Hao J."/>
            <person name="Honchak B.M."/>
            <person name="Karbach L.E."/>
            <person name="Kurdoglu A."/>
            <person name="Lahiri S."/>
            <person name="Mastrian S.D."/>
            <person name="Miyashita H."/>
            <person name="Page L."/>
            <person name="Ramakrishna P."/>
            <person name="Satoh S."/>
            <person name="Sattley W.M."/>
            <person name="Shimada Y."/>
            <person name="Taylor H.L."/>
            <person name="Tomo T."/>
            <person name="Tsuchiya T."/>
            <person name="Wang Z.T."/>
            <person name="Raymond J."/>
            <person name="Mimuro M."/>
            <person name="Blankenship R.E."/>
            <person name="Touchman J.W."/>
        </authorList>
    </citation>
    <scope>NUCLEOTIDE SEQUENCE [LARGE SCALE GENOMIC DNA]</scope>
    <source>
        <strain>MBIC 11017</strain>
    </source>
</reference>
<dbReference type="EC" id="3.1.21.10" evidence="1"/>
<dbReference type="EMBL" id="CP000828">
    <property type="protein sequence ID" value="ABW30218.1"/>
    <property type="molecule type" value="Genomic_DNA"/>
</dbReference>
<dbReference type="RefSeq" id="WP_012165476.1">
    <property type="nucleotide sequence ID" value="NC_009925.1"/>
</dbReference>
<dbReference type="SMR" id="B0C9S0"/>
<dbReference type="STRING" id="329726.AM1_5256"/>
<dbReference type="KEGG" id="amr:AM1_5256"/>
<dbReference type="eggNOG" id="COG0817">
    <property type="taxonomic scope" value="Bacteria"/>
</dbReference>
<dbReference type="HOGENOM" id="CLU_091257_3_1_3"/>
<dbReference type="OrthoDB" id="9805499at2"/>
<dbReference type="Proteomes" id="UP000000268">
    <property type="component" value="Chromosome"/>
</dbReference>
<dbReference type="GO" id="GO:0005737">
    <property type="term" value="C:cytoplasm"/>
    <property type="evidence" value="ECO:0007669"/>
    <property type="project" value="UniProtKB-SubCell"/>
</dbReference>
<dbReference type="GO" id="GO:0048476">
    <property type="term" value="C:Holliday junction resolvase complex"/>
    <property type="evidence" value="ECO:0007669"/>
    <property type="project" value="UniProtKB-UniRule"/>
</dbReference>
<dbReference type="GO" id="GO:0008821">
    <property type="term" value="F:crossover junction DNA endonuclease activity"/>
    <property type="evidence" value="ECO:0007669"/>
    <property type="project" value="UniProtKB-UniRule"/>
</dbReference>
<dbReference type="GO" id="GO:0003677">
    <property type="term" value="F:DNA binding"/>
    <property type="evidence" value="ECO:0007669"/>
    <property type="project" value="UniProtKB-KW"/>
</dbReference>
<dbReference type="GO" id="GO:0000287">
    <property type="term" value="F:magnesium ion binding"/>
    <property type="evidence" value="ECO:0007669"/>
    <property type="project" value="UniProtKB-UniRule"/>
</dbReference>
<dbReference type="GO" id="GO:0006310">
    <property type="term" value="P:DNA recombination"/>
    <property type="evidence" value="ECO:0007669"/>
    <property type="project" value="UniProtKB-UniRule"/>
</dbReference>
<dbReference type="GO" id="GO:0006281">
    <property type="term" value="P:DNA repair"/>
    <property type="evidence" value="ECO:0007669"/>
    <property type="project" value="UniProtKB-UniRule"/>
</dbReference>
<dbReference type="CDD" id="cd16962">
    <property type="entry name" value="RuvC"/>
    <property type="match status" value="1"/>
</dbReference>
<dbReference type="FunFam" id="3.30.420.10:FF:000002">
    <property type="entry name" value="Crossover junction endodeoxyribonuclease RuvC"/>
    <property type="match status" value="1"/>
</dbReference>
<dbReference type="Gene3D" id="3.30.420.10">
    <property type="entry name" value="Ribonuclease H-like superfamily/Ribonuclease H"/>
    <property type="match status" value="1"/>
</dbReference>
<dbReference type="HAMAP" id="MF_00034">
    <property type="entry name" value="RuvC"/>
    <property type="match status" value="1"/>
</dbReference>
<dbReference type="InterPro" id="IPR012337">
    <property type="entry name" value="RNaseH-like_sf"/>
</dbReference>
<dbReference type="InterPro" id="IPR036397">
    <property type="entry name" value="RNaseH_sf"/>
</dbReference>
<dbReference type="InterPro" id="IPR020563">
    <property type="entry name" value="X-over_junc_endoDNase_Mg_BS"/>
</dbReference>
<dbReference type="InterPro" id="IPR002176">
    <property type="entry name" value="X-over_junc_endoDNase_RuvC"/>
</dbReference>
<dbReference type="NCBIfam" id="NF000711">
    <property type="entry name" value="PRK00039.2-1"/>
    <property type="match status" value="1"/>
</dbReference>
<dbReference type="NCBIfam" id="TIGR00228">
    <property type="entry name" value="ruvC"/>
    <property type="match status" value="1"/>
</dbReference>
<dbReference type="PANTHER" id="PTHR30194">
    <property type="entry name" value="CROSSOVER JUNCTION ENDODEOXYRIBONUCLEASE RUVC"/>
    <property type="match status" value="1"/>
</dbReference>
<dbReference type="PANTHER" id="PTHR30194:SF3">
    <property type="entry name" value="CROSSOVER JUNCTION ENDODEOXYRIBONUCLEASE RUVC"/>
    <property type="match status" value="1"/>
</dbReference>
<dbReference type="Pfam" id="PF02075">
    <property type="entry name" value="RuvC"/>
    <property type="match status" value="1"/>
</dbReference>
<dbReference type="PRINTS" id="PR00696">
    <property type="entry name" value="RSOLVASERUVC"/>
</dbReference>
<dbReference type="SUPFAM" id="SSF53098">
    <property type="entry name" value="Ribonuclease H-like"/>
    <property type="match status" value="1"/>
</dbReference>
<dbReference type="PROSITE" id="PS01321">
    <property type="entry name" value="RUVC"/>
    <property type="match status" value="1"/>
</dbReference>
<organism>
    <name type="scientific">Acaryochloris marina (strain MBIC 11017)</name>
    <dbReference type="NCBI Taxonomy" id="329726"/>
    <lineage>
        <taxon>Bacteria</taxon>
        <taxon>Bacillati</taxon>
        <taxon>Cyanobacteriota</taxon>
        <taxon>Cyanophyceae</taxon>
        <taxon>Acaryochloridales</taxon>
        <taxon>Acaryochloridaceae</taxon>
        <taxon>Acaryochloris</taxon>
    </lineage>
</organism>
<accession>B0C9S0</accession>
<protein>
    <recommendedName>
        <fullName evidence="1">Crossover junction endodeoxyribonuclease RuvC</fullName>
        <ecNumber evidence="1">3.1.21.10</ecNumber>
    </recommendedName>
    <alternativeName>
        <fullName evidence="1">Holliday junction nuclease RuvC</fullName>
    </alternativeName>
    <alternativeName>
        <fullName evidence="1">Holliday junction resolvase RuvC</fullName>
    </alternativeName>
</protein>
<comment type="function">
    <text evidence="1">The RuvA-RuvB-RuvC complex processes Holliday junction (HJ) DNA during genetic recombination and DNA repair. Endonuclease that resolves HJ intermediates. Cleaves cruciform DNA by making single-stranded nicks across the HJ at symmetrical positions within the homologous arms, yielding a 5'-phosphate and a 3'-hydroxyl group; requires a central core of homology in the junction. The consensus cleavage sequence is 5'-(A/T)TT(C/G)-3'. Cleavage occurs on the 3'-side of the TT dinucleotide at the point of strand exchange. HJ branch migration catalyzed by RuvA-RuvB allows RuvC to scan DNA until it finds its consensus sequence, where it cleaves and resolves the cruciform DNA.</text>
</comment>
<comment type="catalytic activity">
    <reaction evidence="1">
        <text>Endonucleolytic cleavage at a junction such as a reciprocal single-stranded crossover between two homologous DNA duplexes (Holliday junction).</text>
        <dbReference type="EC" id="3.1.21.10"/>
    </reaction>
</comment>
<comment type="cofactor">
    <cofactor evidence="1">
        <name>Mg(2+)</name>
        <dbReference type="ChEBI" id="CHEBI:18420"/>
    </cofactor>
    <text evidence="1">Binds 2 Mg(2+) ion per subunit.</text>
</comment>
<comment type="subunit">
    <text evidence="1">Homodimer which binds Holliday junction (HJ) DNA. The HJ becomes 2-fold symmetrical on binding to RuvC with unstacked arms; it has a different conformation from HJ DNA in complex with RuvA. In the full resolvosome a probable DNA-RuvA(4)-RuvB(12)-RuvC(2) complex forms which resolves the HJ.</text>
</comment>
<comment type="subcellular location">
    <subcellularLocation>
        <location evidence="1">Cytoplasm</location>
    </subcellularLocation>
</comment>
<comment type="similarity">
    <text evidence="1">Belongs to the RuvC family.</text>
</comment>
<keyword id="KW-0963">Cytoplasm</keyword>
<keyword id="KW-0227">DNA damage</keyword>
<keyword id="KW-0233">DNA recombination</keyword>
<keyword id="KW-0234">DNA repair</keyword>
<keyword id="KW-0238">DNA-binding</keyword>
<keyword id="KW-0255">Endonuclease</keyword>
<keyword id="KW-0378">Hydrolase</keyword>
<keyword id="KW-0460">Magnesium</keyword>
<keyword id="KW-0479">Metal-binding</keyword>
<keyword id="KW-0540">Nuclease</keyword>
<keyword id="KW-1185">Reference proteome</keyword>
<sequence>MTKKILGLDPGLASLGFGVICTESDNLELLDFGIIQTPAKTDIGKRLQIIYEDLHQVLNTHQPDVVAIEKLFFYRMGNTILVAQARGVVLLVLAQHQLPIIEYTPAQIKLALTGYGAADKVAVQEAVARELCLDCLPRPDDAADALAVALTAWFQR</sequence>
<evidence type="ECO:0000255" key="1">
    <source>
        <dbReference type="HAMAP-Rule" id="MF_00034"/>
    </source>
</evidence>
<gene>
    <name evidence="1" type="primary">ruvC</name>
    <name type="ordered locus">AM1_5256</name>
</gene>
<feature type="chain" id="PRO_1000074477" description="Crossover junction endodeoxyribonuclease RuvC">
    <location>
        <begin position="1"/>
        <end position="156"/>
    </location>
</feature>
<feature type="active site" evidence="1">
    <location>
        <position position="9"/>
    </location>
</feature>
<feature type="active site" evidence="1">
    <location>
        <position position="69"/>
    </location>
</feature>
<feature type="active site" evidence="1">
    <location>
        <position position="141"/>
    </location>
</feature>
<feature type="binding site" evidence="1">
    <location>
        <position position="9"/>
    </location>
    <ligand>
        <name>Mg(2+)</name>
        <dbReference type="ChEBI" id="CHEBI:18420"/>
        <label>1</label>
    </ligand>
</feature>
<feature type="binding site" evidence="1">
    <location>
        <position position="69"/>
    </location>
    <ligand>
        <name>Mg(2+)</name>
        <dbReference type="ChEBI" id="CHEBI:18420"/>
        <label>2</label>
    </ligand>
</feature>
<feature type="binding site" evidence="1">
    <location>
        <position position="141"/>
    </location>
    <ligand>
        <name>Mg(2+)</name>
        <dbReference type="ChEBI" id="CHEBI:18420"/>
        <label>1</label>
    </ligand>
</feature>